<organism>
    <name type="scientific">Thermotoga neapolitana (strain ATCC 49049 / DSM 4359 / NBRC 107923 / NS-E)</name>
    <dbReference type="NCBI Taxonomy" id="309803"/>
    <lineage>
        <taxon>Bacteria</taxon>
        <taxon>Thermotogati</taxon>
        <taxon>Thermotogota</taxon>
        <taxon>Thermotogae</taxon>
        <taxon>Thermotogales</taxon>
        <taxon>Thermotogaceae</taxon>
        <taxon>Thermotoga</taxon>
    </lineage>
</organism>
<reference key="1">
    <citation type="submission" date="2007-11" db="EMBL/GenBank/DDBJ databases">
        <title>The genome sequence of the hyperthermophilic bacterium Thermotoga neapolitana.</title>
        <authorList>
            <person name="Lim S.K."/>
            <person name="Kim J.S."/>
            <person name="Cha S.H."/>
            <person name="Park B.C."/>
            <person name="Lee D.S."/>
            <person name="Tae H.S."/>
            <person name="Kim S.-J."/>
            <person name="Kim J.J."/>
            <person name="Park K.J."/>
            <person name="Lee S.Y."/>
        </authorList>
    </citation>
    <scope>NUCLEOTIDE SEQUENCE [LARGE SCALE GENOMIC DNA]</scope>
    <source>
        <strain>ATCC 49049 / DSM 4359 / NBRC 107923 / NS-E</strain>
    </source>
</reference>
<feature type="chain" id="PRO_1000187370" description="Methylthioribose-1-phosphate isomerase">
    <location>
        <begin position="1"/>
        <end position="343"/>
    </location>
</feature>
<feature type="active site" description="Proton donor" evidence="1">
    <location>
        <position position="234"/>
    </location>
</feature>
<feature type="binding site" evidence="1">
    <location>
        <begin position="48"/>
        <end position="50"/>
    </location>
    <ligand>
        <name>substrate</name>
    </ligand>
</feature>
<feature type="binding site" evidence="1">
    <location>
        <position position="88"/>
    </location>
    <ligand>
        <name>substrate</name>
    </ligand>
</feature>
<feature type="binding site" evidence="1">
    <location>
        <position position="193"/>
    </location>
    <ligand>
        <name>substrate</name>
    </ligand>
</feature>
<feature type="binding site" evidence="1">
    <location>
        <begin position="244"/>
        <end position="245"/>
    </location>
    <ligand>
        <name>substrate</name>
    </ligand>
</feature>
<feature type="site" description="Transition state stabilizer" evidence="1">
    <location>
        <position position="154"/>
    </location>
</feature>
<protein>
    <recommendedName>
        <fullName evidence="1">Methylthioribose-1-phosphate isomerase</fullName>
        <shortName evidence="1">M1Pi</shortName>
        <shortName evidence="1">MTR-1-P isomerase</shortName>
        <ecNumber evidence="1">5.3.1.23</ecNumber>
    </recommendedName>
    <alternativeName>
        <fullName evidence="1">S-methyl-5-thioribose-1-phosphate isomerase</fullName>
    </alternativeName>
</protein>
<evidence type="ECO:0000255" key="1">
    <source>
        <dbReference type="HAMAP-Rule" id="MF_01678"/>
    </source>
</evidence>
<evidence type="ECO:0000305" key="2"/>
<accession>B9KA57</accession>
<sequence>MKLKTKTMEWTGNSLRLLDQRKLPFIEEYVECKTHEEVAHAIKEMIVRGAPAIGVTAAFGYVLGFREYRSGDLKEWMKQVKEVLSRTRPTAVNLFWALNRMEKVFLENLKNENLGEILEEEAMKMAQEDIETNRAIGRNGAELIEDGSTILTHCNAGALATVDYGTALGVIRAAVEAGKRVRVFADETRPYLQGARLTAWELMKDGIEVYVITDNMAGWLMKRGMIDAVVVGADRIALNGDTANKIGTYSLAVLAKRNNVPFYVAAPISTIDPTIKSGDEIPIEERRAEEVTHCGGNRIAPEGVKVLNPAFDVTENSLITAIITEKGVIKPPFEENIKKILGV</sequence>
<keyword id="KW-0028">Amino-acid biosynthesis</keyword>
<keyword id="KW-0413">Isomerase</keyword>
<keyword id="KW-0486">Methionine biosynthesis</keyword>
<dbReference type="EC" id="5.3.1.23" evidence="1"/>
<dbReference type="EMBL" id="CP000916">
    <property type="protein sequence ID" value="ACM23840.1"/>
    <property type="molecule type" value="Genomic_DNA"/>
</dbReference>
<dbReference type="RefSeq" id="WP_015920078.1">
    <property type="nucleotide sequence ID" value="NC_011978.1"/>
</dbReference>
<dbReference type="SMR" id="B9KA57"/>
<dbReference type="STRING" id="309803.CTN_1664"/>
<dbReference type="KEGG" id="tna:CTN_1664"/>
<dbReference type="eggNOG" id="COG0182">
    <property type="taxonomic scope" value="Bacteria"/>
</dbReference>
<dbReference type="HOGENOM" id="CLU_016218_1_2_0"/>
<dbReference type="UniPathway" id="UPA00904">
    <property type="reaction ID" value="UER00874"/>
</dbReference>
<dbReference type="Proteomes" id="UP000000445">
    <property type="component" value="Chromosome"/>
</dbReference>
<dbReference type="GO" id="GO:0046523">
    <property type="term" value="F:S-methyl-5-thioribose-1-phosphate isomerase activity"/>
    <property type="evidence" value="ECO:0007669"/>
    <property type="project" value="UniProtKB-UniRule"/>
</dbReference>
<dbReference type="GO" id="GO:0019509">
    <property type="term" value="P:L-methionine salvage from methylthioadenosine"/>
    <property type="evidence" value="ECO:0007669"/>
    <property type="project" value="UniProtKB-UniRule"/>
</dbReference>
<dbReference type="FunFam" id="1.20.120.420:FF:000003">
    <property type="entry name" value="Methylthioribose-1-phosphate isomerase"/>
    <property type="match status" value="1"/>
</dbReference>
<dbReference type="FunFam" id="3.40.50.10470:FF:000010">
    <property type="entry name" value="Methylthioribose-1-phosphate isomerase"/>
    <property type="match status" value="1"/>
</dbReference>
<dbReference type="Gene3D" id="1.20.120.420">
    <property type="entry name" value="translation initiation factor eif-2b, domain 1"/>
    <property type="match status" value="1"/>
</dbReference>
<dbReference type="Gene3D" id="3.40.50.10470">
    <property type="entry name" value="Translation initiation factor eif-2b, domain 2"/>
    <property type="match status" value="1"/>
</dbReference>
<dbReference type="HAMAP" id="MF_01678">
    <property type="entry name" value="Salvage_MtnA"/>
    <property type="match status" value="1"/>
</dbReference>
<dbReference type="InterPro" id="IPR000649">
    <property type="entry name" value="IF-2B-related"/>
</dbReference>
<dbReference type="InterPro" id="IPR005251">
    <property type="entry name" value="IF-M1Pi"/>
</dbReference>
<dbReference type="InterPro" id="IPR042529">
    <property type="entry name" value="IF_2B-like_C"/>
</dbReference>
<dbReference type="InterPro" id="IPR011559">
    <property type="entry name" value="Initiation_fac_2B_a/b/d"/>
</dbReference>
<dbReference type="InterPro" id="IPR027363">
    <property type="entry name" value="M1Pi_N"/>
</dbReference>
<dbReference type="InterPro" id="IPR037171">
    <property type="entry name" value="NagB/RpiA_transferase-like"/>
</dbReference>
<dbReference type="NCBIfam" id="TIGR00524">
    <property type="entry name" value="eIF-2B_rel"/>
    <property type="match status" value="1"/>
</dbReference>
<dbReference type="NCBIfam" id="NF004326">
    <property type="entry name" value="PRK05720.1"/>
    <property type="match status" value="1"/>
</dbReference>
<dbReference type="NCBIfam" id="TIGR00512">
    <property type="entry name" value="salvage_mtnA"/>
    <property type="match status" value="1"/>
</dbReference>
<dbReference type="PANTHER" id="PTHR43475">
    <property type="entry name" value="METHYLTHIORIBOSE-1-PHOSPHATE ISOMERASE"/>
    <property type="match status" value="1"/>
</dbReference>
<dbReference type="PANTHER" id="PTHR43475:SF1">
    <property type="entry name" value="METHYLTHIORIBOSE-1-PHOSPHATE ISOMERASE"/>
    <property type="match status" value="1"/>
</dbReference>
<dbReference type="Pfam" id="PF01008">
    <property type="entry name" value="IF-2B"/>
    <property type="match status" value="1"/>
</dbReference>
<dbReference type="SUPFAM" id="SSF100950">
    <property type="entry name" value="NagB/RpiA/CoA transferase-like"/>
    <property type="match status" value="1"/>
</dbReference>
<comment type="function">
    <text evidence="1">Catalyzes the interconversion of methylthioribose-1-phosphate (MTR-1-P) into methylthioribulose-1-phosphate (MTRu-1-P).</text>
</comment>
<comment type="catalytic activity">
    <reaction evidence="1">
        <text>5-(methylsulfanyl)-alpha-D-ribose 1-phosphate = 5-(methylsulfanyl)-D-ribulose 1-phosphate</text>
        <dbReference type="Rhea" id="RHEA:19989"/>
        <dbReference type="ChEBI" id="CHEBI:58533"/>
        <dbReference type="ChEBI" id="CHEBI:58548"/>
        <dbReference type="EC" id="5.3.1.23"/>
    </reaction>
</comment>
<comment type="pathway">
    <text evidence="1">Amino-acid biosynthesis; L-methionine biosynthesis via salvage pathway; L-methionine from S-methyl-5-thio-alpha-D-ribose 1-phosphate: step 1/6.</text>
</comment>
<comment type="similarity">
    <text evidence="2">Belongs to the eIF-2B alpha/beta/delta subunits family. MtnA subfamily.</text>
</comment>
<gene>
    <name evidence="1" type="primary">mtnA</name>
    <name type="ordered locus">CTN_1664</name>
</gene>
<name>MTNA_THENN</name>
<proteinExistence type="inferred from homology"/>